<feature type="peptide" id="PRO_0000405854" description="Cyclotide cter-C" evidence="2 3">
    <location>
        <begin position="1"/>
        <end position="31"/>
    </location>
</feature>
<feature type="disulfide bond" evidence="1 2">
    <location>
        <begin position="4"/>
        <end position="21"/>
    </location>
</feature>
<feature type="disulfide bond" evidence="1 2">
    <location>
        <begin position="8"/>
        <end position="23"/>
    </location>
</feature>
<feature type="disulfide bond" evidence="1 2">
    <location>
        <begin position="13"/>
        <end position="28"/>
    </location>
</feature>
<feature type="cross-link" description="Cyclopeptide (Gly-Asp)" evidence="4">
    <location>
        <begin position="1"/>
        <end position="31"/>
    </location>
</feature>
<sequence length="31" mass="3278">GVPCAESCVWIPCTVTALLGCSCKDKVCYLD</sequence>
<protein>
    <recommendedName>
        <fullName evidence="4">Cyclotide cter-C</fullName>
    </recommendedName>
</protein>
<accession>P86843</accession>
<keyword id="KW-0903">Direct protein sequencing</keyword>
<keyword id="KW-1015">Disulfide bond</keyword>
<keyword id="KW-0960">Knottin</keyword>
<keyword id="KW-0611">Plant defense</keyword>
<reference evidence="5" key="1">
    <citation type="journal article" date="2011" name="ACS Chem. Biol.">
        <title>The discovery of cyclotides in the Fabaceae plant family provides new insights into the cyclization, evolution and distribution of circular proteins.</title>
        <authorList>
            <person name="Poth A.G."/>
            <person name="Colgrave M.L."/>
            <person name="Philip R."/>
            <person name="Kerenga B."/>
            <person name="Daly N.L."/>
            <person name="Anderson M."/>
            <person name="Craik D.J."/>
        </authorList>
    </citation>
    <scope>PROTEIN SEQUENCE</scope>
    <scope>DISULFIDE BONDS</scope>
    <scope>CYCLIZATION</scope>
    <scope>MASS SPECTROMETRY</scope>
    <source>
        <tissue evidence="3">Seed</tissue>
    </source>
</reference>
<evidence type="ECO:0000250" key="1">
    <source>
        <dbReference type="UniProtKB" id="P56254"/>
    </source>
</evidence>
<evidence type="ECO:0000255" key="2">
    <source>
        <dbReference type="PROSITE-ProRule" id="PRU00395"/>
    </source>
</evidence>
<evidence type="ECO:0000269" key="3">
    <source>
    </source>
</evidence>
<evidence type="ECO:0000303" key="4">
    <source>
    </source>
</evidence>
<evidence type="ECO:0000305" key="5"/>
<name>CYCC_CLITE</name>
<organism>
    <name type="scientific">Clitoria ternatea</name>
    <name type="common">Butterfly pea</name>
    <dbReference type="NCBI Taxonomy" id="43366"/>
    <lineage>
        <taxon>Eukaryota</taxon>
        <taxon>Viridiplantae</taxon>
        <taxon>Streptophyta</taxon>
        <taxon>Embryophyta</taxon>
        <taxon>Tracheophyta</taxon>
        <taxon>Spermatophyta</taxon>
        <taxon>Magnoliopsida</taxon>
        <taxon>eudicotyledons</taxon>
        <taxon>Gunneridae</taxon>
        <taxon>Pentapetalae</taxon>
        <taxon>rosids</taxon>
        <taxon>fabids</taxon>
        <taxon>Fabales</taxon>
        <taxon>Fabaceae</taxon>
        <taxon>Papilionoideae</taxon>
        <taxon>50 kb inversion clade</taxon>
        <taxon>NPAAA clade</taxon>
        <taxon>indigoferoid/millettioid clade</taxon>
        <taxon>Phaseoleae</taxon>
        <taxon>Clitoria</taxon>
    </lineage>
</organism>
<dbReference type="SMR" id="P86843"/>
<dbReference type="GO" id="GO:0006952">
    <property type="term" value="P:defense response"/>
    <property type="evidence" value="ECO:0007669"/>
    <property type="project" value="UniProtKB-KW"/>
</dbReference>
<dbReference type="InterPro" id="IPR005535">
    <property type="entry name" value="Cyclotide"/>
</dbReference>
<dbReference type="InterPro" id="IPR012323">
    <property type="entry name" value="Cyclotide_bracelet_CS"/>
</dbReference>
<dbReference type="InterPro" id="IPR036146">
    <property type="entry name" value="Cyclotide_sf"/>
</dbReference>
<dbReference type="Pfam" id="PF03784">
    <property type="entry name" value="Cyclotide"/>
    <property type="match status" value="1"/>
</dbReference>
<dbReference type="PIRSF" id="PIRSF037891">
    <property type="entry name" value="Cycloviolacin"/>
    <property type="match status" value="1"/>
</dbReference>
<dbReference type="SUPFAM" id="SSF57038">
    <property type="entry name" value="Cyclotides"/>
    <property type="match status" value="1"/>
</dbReference>
<dbReference type="PROSITE" id="PS51052">
    <property type="entry name" value="CYCLOTIDE"/>
    <property type="match status" value="1"/>
</dbReference>
<dbReference type="PROSITE" id="PS60008">
    <property type="entry name" value="CYCLOTIDE_BRACELET"/>
    <property type="match status" value="1"/>
</dbReference>
<comment type="function">
    <text evidence="1 2">Probably participates in a plant defense mechanism.</text>
</comment>
<comment type="domain">
    <text evidence="5">The presence of a 'disulfide through disulfide knot' structurally defines this protein as a knottin.</text>
</comment>
<comment type="PTM">
    <text evidence="3">Contains 3 disulfide bonds.</text>
</comment>
<comment type="PTM">
    <text evidence="2 3">This is a cyclic peptide.</text>
</comment>
<comment type="mass spectrometry" mass="3251.76" method="Electrospray" evidence="3"/>
<comment type="similarity">
    <text evidence="2">Belongs to the cyclotide family. Bracelet subfamily.</text>
</comment>
<comment type="caution">
    <text evidence="5">This peptide is cyclic. The start position was chosen by similarity to cliotide cter-B for which the DNA sequence is known.</text>
</comment>
<proteinExistence type="evidence at protein level"/>